<feature type="chain" id="PRO_0000413760" description="Nucleoid occlusion factor SlmA">
    <location>
        <begin position="1"/>
        <end position="195"/>
    </location>
</feature>
<feature type="domain" description="HTH tetR-type" evidence="1">
    <location>
        <begin position="6"/>
        <end position="66"/>
    </location>
</feature>
<feature type="DNA-binding region" description="H-T-H motif" evidence="1">
    <location>
        <begin position="29"/>
        <end position="48"/>
    </location>
</feature>
<feature type="coiled-coil region" evidence="1">
    <location>
        <begin position="118"/>
        <end position="138"/>
    </location>
</feature>
<reference key="1">
    <citation type="journal article" date="2011" name="Appl. Environ. Microbiol.">
        <title>Genomic potential of Marinobacter aquaeolei, a biogeochemical 'opportunitroph'.</title>
        <authorList>
            <person name="Singer E."/>
            <person name="Webb E.A."/>
            <person name="Nelson W.C."/>
            <person name="Heidelberg J.F."/>
            <person name="Ivanova N."/>
            <person name="Pati A."/>
            <person name="Edwards K.J."/>
        </authorList>
    </citation>
    <scope>NUCLEOTIDE SEQUENCE [LARGE SCALE GENOMIC DNA]</scope>
    <source>
        <strain>ATCC 700491 / DSM 11845 / VT8</strain>
    </source>
</reference>
<name>SLMA_MARN8</name>
<accession>A1U6F3</accession>
<gene>
    <name evidence="1" type="primary">slmA</name>
    <name type="ordered locus">Maqu_3502</name>
</gene>
<sequence length="195" mass="22100">MTNQKPSRRESILQALVELLQSDPGARITTAGLAKTVGVTEAALYRHFPSKRKMFEALIEFAEEAVFSRCQVILQEQEDVRVRLQQLSHLVLVFAERNPGLCCVLTGDALMGEDESLRKRASQFFERLETQIRQALKEGEIRQGLRPRTTAARGADFVMVFVEGRIQRFVRSSFLRLPTSDFDEAWGLVSEAVWG</sequence>
<organism>
    <name type="scientific">Marinobacter nauticus (strain ATCC 700491 / DSM 11845 / VT8)</name>
    <name type="common">Marinobacter aquaeolei</name>
    <dbReference type="NCBI Taxonomy" id="351348"/>
    <lineage>
        <taxon>Bacteria</taxon>
        <taxon>Pseudomonadati</taxon>
        <taxon>Pseudomonadota</taxon>
        <taxon>Gammaproteobacteria</taxon>
        <taxon>Pseudomonadales</taxon>
        <taxon>Marinobacteraceae</taxon>
        <taxon>Marinobacter</taxon>
    </lineage>
</organism>
<protein>
    <recommendedName>
        <fullName evidence="1">Nucleoid occlusion factor SlmA</fullName>
    </recommendedName>
</protein>
<proteinExistence type="inferred from homology"/>
<keyword id="KW-0131">Cell cycle</keyword>
<keyword id="KW-0132">Cell division</keyword>
<keyword id="KW-0175">Coiled coil</keyword>
<keyword id="KW-0963">Cytoplasm</keyword>
<keyword id="KW-0238">DNA-binding</keyword>
<comment type="function">
    <text evidence="1">Required for nucleoid occlusion (NO) phenomenon, which prevents Z-ring formation and cell division over the nucleoid. Acts as a DNA-associated cell division inhibitor that binds simultaneously chromosomal DNA and FtsZ, and disrupts the assembly of FtsZ polymers. SlmA-DNA-binding sequences (SBS) are dispersed on non-Ter regions of the chromosome, preventing FtsZ polymerization at these regions.</text>
</comment>
<comment type="subunit">
    <text evidence="1">Homodimer. Interacts with FtsZ.</text>
</comment>
<comment type="subcellular location">
    <subcellularLocation>
        <location evidence="1">Cytoplasm</location>
        <location evidence="1">Nucleoid</location>
    </subcellularLocation>
</comment>
<comment type="similarity">
    <text evidence="1">Belongs to the nucleoid occlusion factor SlmA family.</text>
</comment>
<evidence type="ECO:0000255" key="1">
    <source>
        <dbReference type="HAMAP-Rule" id="MF_01839"/>
    </source>
</evidence>
<dbReference type="EMBL" id="CP000514">
    <property type="protein sequence ID" value="ABM20572.1"/>
    <property type="molecule type" value="Genomic_DNA"/>
</dbReference>
<dbReference type="RefSeq" id="WP_011786913.1">
    <property type="nucleotide sequence ID" value="NC_008740.1"/>
</dbReference>
<dbReference type="SMR" id="A1U6F3"/>
<dbReference type="STRING" id="351348.Maqu_3502"/>
<dbReference type="KEGG" id="maq:Maqu_3502"/>
<dbReference type="eggNOG" id="COG1309">
    <property type="taxonomic scope" value="Bacteria"/>
</dbReference>
<dbReference type="HOGENOM" id="CLU_069356_5_0_6"/>
<dbReference type="OrthoDB" id="9179041at2"/>
<dbReference type="Proteomes" id="UP000000998">
    <property type="component" value="Chromosome"/>
</dbReference>
<dbReference type="GO" id="GO:0043590">
    <property type="term" value="C:bacterial nucleoid"/>
    <property type="evidence" value="ECO:0007669"/>
    <property type="project" value="UniProtKB-UniRule"/>
</dbReference>
<dbReference type="GO" id="GO:0005737">
    <property type="term" value="C:cytoplasm"/>
    <property type="evidence" value="ECO:0007669"/>
    <property type="project" value="UniProtKB-UniRule"/>
</dbReference>
<dbReference type="GO" id="GO:0003700">
    <property type="term" value="F:DNA-binding transcription factor activity"/>
    <property type="evidence" value="ECO:0007669"/>
    <property type="project" value="TreeGrafter"/>
</dbReference>
<dbReference type="GO" id="GO:0000976">
    <property type="term" value="F:transcription cis-regulatory region binding"/>
    <property type="evidence" value="ECO:0007669"/>
    <property type="project" value="TreeGrafter"/>
</dbReference>
<dbReference type="GO" id="GO:0051301">
    <property type="term" value="P:cell division"/>
    <property type="evidence" value="ECO:0007669"/>
    <property type="project" value="UniProtKB-KW"/>
</dbReference>
<dbReference type="GO" id="GO:0010974">
    <property type="term" value="P:negative regulation of division septum assembly"/>
    <property type="evidence" value="ECO:0007669"/>
    <property type="project" value="InterPro"/>
</dbReference>
<dbReference type="Gene3D" id="1.10.357.10">
    <property type="entry name" value="Tetracycline Repressor, domain 2"/>
    <property type="match status" value="1"/>
</dbReference>
<dbReference type="HAMAP" id="MF_01839">
    <property type="entry name" value="NO_factor_SlmA"/>
    <property type="match status" value="1"/>
</dbReference>
<dbReference type="InterPro" id="IPR009057">
    <property type="entry name" value="Homeodomain-like_sf"/>
</dbReference>
<dbReference type="InterPro" id="IPR050109">
    <property type="entry name" value="HTH-type_TetR-like_transc_reg"/>
</dbReference>
<dbReference type="InterPro" id="IPR001647">
    <property type="entry name" value="HTH_TetR"/>
</dbReference>
<dbReference type="InterPro" id="IPR023769">
    <property type="entry name" value="NO_SlmA"/>
</dbReference>
<dbReference type="InterPro" id="IPR054580">
    <property type="entry name" value="SlmA-like_C"/>
</dbReference>
<dbReference type="InterPro" id="IPR036271">
    <property type="entry name" value="Tet_transcr_reg_TetR-rel_C_sf"/>
</dbReference>
<dbReference type="NCBIfam" id="NF007015">
    <property type="entry name" value="PRK09480.1"/>
    <property type="match status" value="1"/>
</dbReference>
<dbReference type="PANTHER" id="PTHR30055">
    <property type="entry name" value="HTH-TYPE TRANSCRIPTIONAL REGULATOR RUTR"/>
    <property type="match status" value="1"/>
</dbReference>
<dbReference type="PANTHER" id="PTHR30055:SF183">
    <property type="entry name" value="NUCLEOID OCCLUSION FACTOR SLMA"/>
    <property type="match status" value="1"/>
</dbReference>
<dbReference type="Pfam" id="PF22276">
    <property type="entry name" value="SlmA-like_C"/>
    <property type="match status" value="1"/>
</dbReference>
<dbReference type="Pfam" id="PF00440">
    <property type="entry name" value="TetR_N"/>
    <property type="match status" value="1"/>
</dbReference>
<dbReference type="SUPFAM" id="SSF46689">
    <property type="entry name" value="Homeodomain-like"/>
    <property type="match status" value="1"/>
</dbReference>
<dbReference type="SUPFAM" id="SSF48498">
    <property type="entry name" value="Tetracyclin repressor-like, C-terminal domain"/>
    <property type="match status" value="1"/>
</dbReference>
<dbReference type="PROSITE" id="PS50977">
    <property type="entry name" value="HTH_TETR_2"/>
    <property type="match status" value="1"/>
</dbReference>